<gene>
    <name evidence="1" type="primary">mnmA</name>
    <name type="synonym">trmU</name>
    <name type="ordered locus">MHJ_0428</name>
</gene>
<sequence length="372" mass="42399">MAKIVVGLSGGVDSAVSAYLLKKAGHNVIAVFMRNWDSSLNNDFLGKKNEKNFTICPQEQDWLDAKVVAKQLNIPIFRIDFIKEYWDEVFSDLILKYQSGLTPNPDILCNKNIKFKHFLDYAQKVHNADFIAMGHYAKTDNGNLYAGADSLKDQSYFLGQLSKSQLQKTIFPLGNLHKSEVRKIANELGLINAKKKDSTGICFIGERKFTDFLQNYIPAQPGNIIDISTKKVLGKHIGIMYFTIGQRKGFGLSGMKEPYFVVGHNLKEKILYVSPQSEKKWLESDSLMAKNANFLSENFRNLDNLSAKFRYRQEAIPIKIEKIQDNSFWISYQKYQAITPGQQVVIYHQNQVILAGEIALLFRNGKKLDYLD</sequence>
<evidence type="ECO:0000255" key="1">
    <source>
        <dbReference type="HAMAP-Rule" id="MF_00144"/>
    </source>
</evidence>
<organism>
    <name type="scientific">Mesomycoplasma hyopneumoniae (strain J / ATCC 25934 / NCTC 10110)</name>
    <name type="common">Mycoplasma hyopneumoniae</name>
    <dbReference type="NCBI Taxonomy" id="262719"/>
    <lineage>
        <taxon>Bacteria</taxon>
        <taxon>Bacillati</taxon>
        <taxon>Mycoplasmatota</taxon>
        <taxon>Mycoplasmoidales</taxon>
        <taxon>Metamycoplasmataceae</taxon>
        <taxon>Mesomycoplasma</taxon>
    </lineage>
</organism>
<dbReference type="EC" id="2.8.1.13" evidence="1"/>
<dbReference type="EMBL" id="AE017243">
    <property type="protein sequence ID" value="AAZ44514.1"/>
    <property type="molecule type" value="Genomic_DNA"/>
</dbReference>
<dbReference type="RefSeq" id="WP_011284186.1">
    <property type="nucleotide sequence ID" value="NC_007295.1"/>
</dbReference>
<dbReference type="SMR" id="Q4A9Q7"/>
<dbReference type="GeneID" id="41334728"/>
<dbReference type="KEGG" id="mhj:MHJ_0428"/>
<dbReference type="eggNOG" id="COG0482">
    <property type="taxonomic scope" value="Bacteria"/>
</dbReference>
<dbReference type="HOGENOM" id="CLU_035188_1_0_14"/>
<dbReference type="OrthoDB" id="9800696at2"/>
<dbReference type="Proteomes" id="UP000000548">
    <property type="component" value="Chromosome"/>
</dbReference>
<dbReference type="GO" id="GO:0005737">
    <property type="term" value="C:cytoplasm"/>
    <property type="evidence" value="ECO:0007669"/>
    <property type="project" value="UniProtKB-SubCell"/>
</dbReference>
<dbReference type="GO" id="GO:0005524">
    <property type="term" value="F:ATP binding"/>
    <property type="evidence" value="ECO:0007669"/>
    <property type="project" value="UniProtKB-KW"/>
</dbReference>
<dbReference type="GO" id="GO:0000049">
    <property type="term" value="F:tRNA binding"/>
    <property type="evidence" value="ECO:0007669"/>
    <property type="project" value="UniProtKB-KW"/>
</dbReference>
<dbReference type="GO" id="GO:0103016">
    <property type="term" value="F:tRNA-uridine 2-sulfurtransferase activity"/>
    <property type="evidence" value="ECO:0007669"/>
    <property type="project" value="UniProtKB-EC"/>
</dbReference>
<dbReference type="GO" id="GO:0002143">
    <property type="term" value="P:tRNA wobble position uridine thiolation"/>
    <property type="evidence" value="ECO:0007669"/>
    <property type="project" value="TreeGrafter"/>
</dbReference>
<dbReference type="CDD" id="cd01998">
    <property type="entry name" value="MnmA_TRMU-like"/>
    <property type="match status" value="1"/>
</dbReference>
<dbReference type="FunFam" id="2.30.30.280:FF:000001">
    <property type="entry name" value="tRNA-specific 2-thiouridylase MnmA"/>
    <property type="match status" value="1"/>
</dbReference>
<dbReference type="FunFam" id="3.40.50.620:FF:000115">
    <property type="entry name" value="tRNA-specific 2-thiouridylase MnmA"/>
    <property type="match status" value="1"/>
</dbReference>
<dbReference type="Gene3D" id="2.30.30.280">
    <property type="entry name" value="Adenine nucleotide alpha hydrolases-like domains"/>
    <property type="match status" value="1"/>
</dbReference>
<dbReference type="Gene3D" id="3.40.50.620">
    <property type="entry name" value="HUPs"/>
    <property type="match status" value="1"/>
</dbReference>
<dbReference type="Gene3D" id="2.40.30.10">
    <property type="entry name" value="Translation factors"/>
    <property type="match status" value="1"/>
</dbReference>
<dbReference type="HAMAP" id="MF_00144">
    <property type="entry name" value="tRNA_thiouridyl_MnmA"/>
    <property type="match status" value="1"/>
</dbReference>
<dbReference type="InterPro" id="IPR004506">
    <property type="entry name" value="MnmA-like"/>
</dbReference>
<dbReference type="InterPro" id="IPR046885">
    <property type="entry name" value="MnmA-like_C"/>
</dbReference>
<dbReference type="InterPro" id="IPR046884">
    <property type="entry name" value="MnmA-like_central"/>
</dbReference>
<dbReference type="InterPro" id="IPR023382">
    <property type="entry name" value="MnmA-like_central_sf"/>
</dbReference>
<dbReference type="InterPro" id="IPR014729">
    <property type="entry name" value="Rossmann-like_a/b/a_fold"/>
</dbReference>
<dbReference type="NCBIfam" id="NF001138">
    <property type="entry name" value="PRK00143.1"/>
    <property type="match status" value="1"/>
</dbReference>
<dbReference type="NCBIfam" id="TIGR00420">
    <property type="entry name" value="trmU"/>
    <property type="match status" value="1"/>
</dbReference>
<dbReference type="PANTHER" id="PTHR11933:SF5">
    <property type="entry name" value="MITOCHONDRIAL TRNA-SPECIFIC 2-THIOURIDYLASE 1"/>
    <property type="match status" value="1"/>
</dbReference>
<dbReference type="PANTHER" id="PTHR11933">
    <property type="entry name" value="TRNA 5-METHYLAMINOMETHYL-2-THIOURIDYLATE -METHYLTRANSFERASE"/>
    <property type="match status" value="1"/>
</dbReference>
<dbReference type="Pfam" id="PF03054">
    <property type="entry name" value="tRNA_Me_trans"/>
    <property type="match status" value="1"/>
</dbReference>
<dbReference type="Pfam" id="PF20258">
    <property type="entry name" value="tRNA_Me_trans_C"/>
    <property type="match status" value="1"/>
</dbReference>
<dbReference type="Pfam" id="PF20259">
    <property type="entry name" value="tRNA_Me_trans_M"/>
    <property type="match status" value="1"/>
</dbReference>
<dbReference type="SUPFAM" id="SSF52402">
    <property type="entry name" value="Adenine nucleotide alpha hydrolases-like"/>
    <property type="match status" value="1"/>
</dbReference>
<reference key="1">
    <citation type="journal article" date="2005" name="J. Bacteriol.">
        <title>Swine and poultry pathogens: the complete genome sequences of two strains of Mycoplasma hyopneumoniae and a strain of Mycoplasma synoviae.</title>
        <authorList>
            <person name="Vasconcelos A.T.R."/>
            <person name="Ferreira H.B."/>
            <person name="Bizarro C.V."/>
            <person name="Bonatto S.L."/>
            <person name="Carvalho M.O."/>
            <person name="Pinto P.M."/>
            <person name="Almeida D.F."/>
            <person name="Almeida L.G.P."/>
            <person name="Almeida R."/>
            <person name="Alves-Junior L."/>
            <person name="Assuncao E.N."/>
            <person name="Azevedo V.A.C."/>
            <person name="Bogo M.R."/>
            <person name="Brigido M.M."/>
            <person name="Brocchi M."/>
            <person name="Burity H.A."/>
            <person name="Camargo A.A."/>
            <person name="Camargo S.S."/>
            <person name="Carepo M.S."/>
            <person name="Carraro D.M."/>
            <person name="de Mattos Cascardo J.C."/>
            <person name="Castro L.A."/>
            <person name="Cavalcanti G."/>
            <person name="Chemale G."/>
            <person name="Collevatti R.G."/>
            <person name="Cunha C.W."/>
            <person name="Dallagiovanna B."/>
            <person name="Dambros B.P."/>
            <person name="Dellagostin O.A."/>
            <person name="Falcao C."/>
            <person name="Fantinatti-Garboggini F."/>
            <person name="Felipe M.S.S."/>
            <person name="Fiorentin L."/>
            <person name="Franco G.R."/>
            <person name="Freitas N.S.A."/>
            <person name="Frias D."/>
            <person name="Grangeiro T.B."/>
            <person name="Grisard E.C."/>
            <person name="Guimaraes C.T."/>
            <person name="Hungria M."/>
            <person name="Jardim S.N."/>
            <person name="Krieger M.A."/>
            <person name="Laurino J.P."/>
            <person name="Lima L.F.A."/>
            <person name="Lopes M.I."/>
            <person name="Loreto E.L.S."/>
            <person name="Madeira H.M.F."/>
            <person name="Manfio G.P."/>
            <person name="Maranhao A.Q."/>
            <person name="Martinkovics C.T."/>
            <person name="Medeiros S.R.B."/>
            <person name="Moreira M.A.M."/>
            <person name="Neiva M."/>
            <person name="Ramalho-Neto C.E."/>
            <person name="Nicolas M.F."/>
            <person name="Oliveira S.C."/>
            <person name="Paixao R.F.C."/>
            <person name="Pedrosa F.O."/>
            <person name="Pena S.D.J."/>
            <person name="Pereira M."/>
            <person name="Pereira-Ferrari L."/>
            <person name="Piffer I."/>
            <person name="Pinto L.S."/>
            <person name="Potrich D.P."/>
            <person name="Salim A.C.M."/>
            <person name="Santos F.R."/>
            <person name="Schmitt R."/>
            <person name="Schneider M.P.C."/>
            <person name="Schrank A."/>
            <person name="Schrank I.S."/>
            <person name="Schuck A.F."/>
            <person name="Seuanez H.N."/>
            <person name="Silva D.W."/>
            <person name="Silva R."/>
            <person name="Silva S.C."/>
            <person name="Soares C.M.A."/>
            <person name="Souza K.R.L."/>
            <person name="Souza R.C."/>
            <person name="Staats C.C."/>
            <person name="Steffens M.B.R."/>
            <person name="Teixeira S.M.R."/>
            <person name="Urmenyi T.P."/>
            <person name="Vainstein M.H."/>
            <person name="Zuccherato L.W."/>
            <person name="Simpson A.J.G."/>
            <person name="Zaha A."/>
        </authorList>
    </citation>
    <scope>NUCLEOTIDE SEQUENCE [LARGE SCALE GENOMIC DNA]</scope>
    <source>
        <strain>J / ATCC 25934 / NCTC 10110</strain>
    </source>
</reference>
<feature type="chain" id="PRO_1000009537" description="tRNA-specific 2-thiouridylase MnmA">
    <location>
        <begin position="1"/>
        <end position="372"/>
    </location>
</feature>
<feature type="region of interest" description="Interaction with target base in tRNA" evidence="1">
    <location>
        <begin position="104"/>
        <end position="106"/>
    </location>
</feature>
<feature type="region of interest" description="Interaction with tRNA" evidence="1">
    <location>
        <begin position="152"/>
        <end position="154"/>
    </location>
</feature>
<feature type="region of interest" description="Interaction with tRNA" evidence="1">
    <location>
        <begin position="310"/>
        <end position="311"/>
    </location>
</feature>
<feature type="active site" description="Nucleophile" evidence="1">
    <location>
        <position position="109"/>
    </location>
</feature>
<feature type="active site" description="Cysteine persulfide intermediate" evidence="1">
    <location>
        <position position="202"/>
    </location>
</feature>
<feature type="binding site" evidence="1">
    <location>
        <begin position="7"/>
        <end position="14"/>
    </location>
    <ligand>
        <name>ATP</name>
        <dbReference type="ChEBI" id="CHEBI:30616"/>
    </ligand>
</feature>
<feature type="binding site" evidence="1">
    <location>
        <position position="33"/>
    </location>
    <ligand>
        <name>ATP</name>
        <dbReference type="ChEBI" id="CHEBI:30616"/>
    </ligand>
</feature>
<feature type="binding site" evidence="1">
    <location>
        <position position="134"/>
    </location>
    <ligand>
        <name>ATP</name>
        <dbReference type="ChEBI" id="CHEBI:30616"/>
    </ligand>
</feature>
<feature type="site" description="Interaction with tRNA" evidence="1">
    <location>
        <position position="135"/>
    </location>
</feature>
<feature type="site" description="Interaction with tRNA" evidence="1">
    <location>
        <position position="342"/>
    </location>
</feature>
<feature type="disulfide bond" description="Alternate" evidence="1">
    <location>
        <begin position="109"/>
        <end position="202"/>
    </location>
</feature>
<proteinExistence type="inferred from homology"/>
<keyword id="KW-0067">ATP-binding</keyword>
<keyword id="KW-0963">Cytoplasm</keyword>
<keyword id="KW-1015">Disulfide bond</keyword>
<keyword id="KW-0547">Nucleotide-binding</keyword>
<keyword id="KW-0694">RNA-binding</keyword>
<keyword id="KW-0808">Transferase</keyword>
<keyword id="KW-0819">tRNA processing</keyword>
<keyword id="KW-0820">tRNA-binding</keyword>
<comment type="function">
    <text evidence="1">Catalyzes the 2-thiolation of uridine at the wobble position (U34) of tRNA, leading to the formation of s(2)U34.</text>
</comment>
<comment type="catalytic activity">
    <reaction evidence="1">
        <text>S-sulfanyl-L-cysteinyl-[protein] + uridine(34) in tRNA + AH2 + ATP = 2-thiouridine(34) in tRNA + L-cysteinyl-[protein] + A + AMP + diphosphate + H(+)</text>
        <dbReference type="Rhea" id="RHEA:47032"/>
        <dbReference type="Rhea" id="RHEA-COMP:10131"/>
        <dbReference type="Rhea" id="RHEA-COMP:11726"/>
        <dbReference type="Rhea" id="RHEA-COMP:11727"/>
        <dbReference type="Rhea" id="RHEA-COMP:11728"/>
        <dbReference type="ChEBI" id="CHEBI:13193"/>
        <dbReference type="ChEBI" id="CHEBI:15378"/>
        <dbReference type="ChEBI" id="CHEBI:17499"/>
        <dbReference type="ChEBI" id="CHEBI:29950"/>
        <dbReference type="ChEBI" id="CHEBI:30616"/>
        <dbReference type="ChEBI" id="CHEBI:33019"/>
        <dbReference type="ChEBI" id="CHEBI:61963"/>
        <dbReference type="ChEBI" id="CHEBI:65315"/>
        <dbReference type="ChEBI" id="CHEBI:87170"/>
        <dbReference type="ChEBI" id="CHEBI:456215"/>
        <dbReference type="EC" id="2.8.1.13"/>
    </reaction>
</comment>
<comment type="subcellular location">
    <subcellularLocation>
        <location evidence="1">Cytoplasm</location>
    </subcellularLocation>
</comment>
<comment type="similarity">
    <text evidence="1">Belongs to the MnmA/TRMU family.</text>
</comment>
<protein>
    <recommendedName>
        <fullName evidence="1">tRNA-specific 2-thiouridylase MnmA</fullName>
        <ecNumber evidence="1">2.8.1.13</ecNumber>
    </recommendedName>
</protein>
<name>MNMA_MESHJ</name>
<accession>Q4A9Q7</accession>